<comment type="function">
    <text evidence="1">Catalyzes the removal of a penultimate prolyl residue from the N-termini of peptides.</text>
</comment>
<comment type="catalytic activity">
    <reaction>
        <text>Release of any N-terminal amino acid, including proline, that is linked to proline, even from a dipeptide or tripeptide.</text>
        <dbReference type="EC" id="3.4.11.9"/>
    </reaction>
</comment>
<comment type="cofactor">
    <cofactor evidence="1">
        <name>Mn(2+)</name>
        <dbReference type="ChEBI" id="CHEBI:29035"/>
    </cofactor>
    <text evidence="1">Binds 2 manganese ions per subunit.</text>
</comment>
<comment type="similarity">
    <text evidence="2">Belongs to the peptidase M24B family.</text>
</comment>
<comment type="sequence caution" evidence="2">
    <conflict type="erroneous gene model prediction">
        <sequence resource="EMBL-CDS" id="BAE62390"/>
    </conflict>
</comment>
<sequence length="654" mass="72826">MLFSRPPIRSPWISAFRSASQLPLSRPRFFSISLSRYSVDMETVNTSERLSRLRELMQEHKVDVYIVPSEDSHQSEYIAPCDGRREFISGFSGSAGTAIVSLSKAALSTDGRYFNQASKQLDNNWQLLKRGVEGFPTWQEWTTEQAEGGKVVGVDPALITASGARSLSETLKKNGSTLVGVQQNLVDLVWGKDRPAPPREKVRVHPEKYAGKSFQEKISELRKELESRKSAGFIVSMLDEIAWLFNLRGSDIPYNPVFFSFATITPTTTELYVDADKLTPEVTAHLGQDVVIKPYDAIYADAKALSETRKQEAGETASKFLLSNKASWALSLSLGGEGQVEEVRSPIGDAKAVKNDVELAGMRACHIRDGAALTEYFAWLENELVNKKSTLDEVDAADKLEQIRSKHDLFVGLSFDTISSTGPNGAVIHYKPEKGSCSIIDPNAIYLCDSGAQYLDGTTDVTRTFHFGQPTELEKKAFTLVLKGVIGLDTAVFPKGTSGFALDVLARQYLWKEGLDYLHGTGHGIGSYLNVHEGPIGVGTRVQYTEVPIAPGNVISDEPGFYEDGKFGIRIENVIMAREVQTTHKFGDKPWLGFEHVTMAPIGRNLIEPSLLSDAELKWVNDYHREIWEKTHHFFENDEYTRSWLQRETQPISK</sequence>
<name>AMPP1_ASPOR</name>
<protein>
    <recommendedName>
        <fullName>Probable Xaa-Pro aminopeptidase P</fullName>
        <shortName>AMPP</shortName>
        <shortName>Aminopeptidase P</shortName>
        <ecNumber>3.4.11.9</ecNumber>
    </recommendedName>
    <alternativeName>
        <fullName>Aminoacylproline aminopeptidase</fullName>
    </alternativeName>
    <alternativeName>
        <fullName>Prolidase</fullName>
    </alternativeName>
</protein>
<keyword id="KW-0031">Aminopeptidase</keyword>
<keyword id="KW-0378">Hydrolase</keyword>
<keyword id="KW-0464">Manganese</keyword>
<keyword id="KW-0479">Metal-binding</keyword>
<keyword id="KW-0482">Metalloprotease</keyword>
<keyword id="KW-0645">Protease</keyword>
<keyword id="KW-1185">Reference proteome</keyword>
<dbReference type="EC" id="3.4.11.9"/>
<dbReference type="EMBL" id="AB078875">
    <property type="protein sequence ID" value="BAD00702.1"/>
    <property type="molecule type" value="mRNA"/>
</dbReference>
<dbReference type="EMBL" id="BA000053">
    <property type="protein sequence ID" value="BAE62390.1"/>
    <property type="status" value="ALT_SEQ"/>
    <property type="molecule type" value="Genomic_DNA"/>
</dbReference>
<dbReference type="RefSeq" id="XP_001823523.2">
    <property type="nucleotide sequence ID" value="XM_001823471.2"/>
</dbReference>
<dbReference type="SMR" id="Q2U7S5"/>
<dbReference type="STRING" id="510516.Q2U7S5"/>
<dbReference type="MEROPS" id="M24.A10"/>
<dbReference type="EnsemblFungi" id="BAE62390">
    <property type="protein sequence ID" value="BAE62390"/>
    <property type="gene ID" value="AO090701000720"/>
</dbReference>
<dbReference type="GeneID" id="5995580"/>
<dbReference type="KEGG" id="aor:AO090701000720"/>
<dbReference type="VEuPathDB" id="FungiDB:AO090701000720"/>
<dbReference type="OMA" id="EPGMILS"/>
<dbReference type="BRENDA" id="3.4.11.9">
    <property type="organism ID" value="522"/>
</dbReference>
<dbReference type="Proteomes" id="UP000006564">
    <property type="component" value="Chromosome 5"/>
</dbReference>
<dbReference type="GO" id="GO:0005737">
    <property type="term" value="C:cytoplasm"/>
    <property type="evidence" value="ECO:0007669"/>
    <property type="project" value="UniProtKB-ARBA"/>
</dbReference>
<dbReference type="GO" id="GO:0046872">
    <property type="term" value="F:metal ion binding"/>
    <property type="evidence" value="ECO:0007669"/>
    <property type="project" value="UniProtKB-KW"/>
</dbReference>
<dbReference type="GO" id="GO:0070006">
    <property type="term" value="F:metalloaminopeptidase activity"/>
    <property type="evidence" value="ECO:0007669"/>
    <property type="project" value="InterPro"/>
</dbReference>
<dbReference type="GO" id="GO:0006508">
    <property type="term" value="P:proteolysis"/>
    <property type="evidence" value="ECO:0007669"/>
    <property type="project" value="UniProtKB-KW"/>
</dbReference>
<dbReference type="CDD" id="cd01085">
    <property type="entry name" value="APP"/>
    <property type="match status" value="1"/>
</dbReference>
<dbReference type="FunFam" id="3.40.350.10:FF:000010">
    <property type="entry name" value="Probable Xaa-Pro aminopeptidase P"/>
    <property type="match status" value="1"/>
</dbReference>
<dbReference type="FunFam" id="3.90.230.10:FF:000007">
    <property type="entry name" value="Xaa-Pro aminopeptidase P"/>
    <property type="match status" value="1"/>
</dbReference>
<dbReference type="FunFam" id="3.40.350.10:FF:000003">
    <property type="entry name" value="Xaa-pro aminopeptidase P"/>
    <property type="match status" value="1"/>
</dbReference>
<dbReference type="Gene3D" id="3.90.230.10">
    <property type="entry name" value="Creatinase/methionine aminopeptidase superfamily"/>
    <property type="match status" value="1"/>
</dbReference>
<dbReference type="Gene3D" id="3.40.350.10">
    <property type="entry name" value="Creatinase/prolidase N-terminal domain"/>
    <property type="match status" value="2"/>
</dbReference>
<dbReference type="InterPro" id="IPR029149">
    <property type="entry name" value="Creatin/AminoP/Spt16_N"/>
</dbReference>
<dbReference type="InterPro" id="IPR036005">
    <property type="entry name" value="Creatinase/aminopeptidase-like"/>
</dbReference>
<dbReference type="InterPro" id="IPR000587">
    <property type="entry name" value="Creatinase_N"/>
</dbReference>
<dbReference type="InterPro" id="IPR000994">
    <property type="entry name" value="Pept_M24"/>
</dbReference>
<dbReference type="InterPro" id="IPR033740">
    <property type="entry name" value="Pept_M24B"/>
</dbReference>
<dbReference type="InterPro" id="IPR032416">
    <property type="entry name" value="Peptidase_M24_C"/>
</dbReference>
<dbReference type="InterPro" id="IPR001131">
    <property type="entry name" value="Peptidase_M24B_aminopep-P_CS"/>
</dbReference>
<dbReference type="InterPro" id="IPR050422">
    <property type="entry name" value="X-Pro_aminopeptidase_P"/>
</dbReference>
<dbReference type="PANTHER" id="PTHR43763">
    <property type="entry name" value="XAA-PRO AMINOPEPTIDASE 1"/>
    <property type="match status" value="1"/>
</dbReference>
<dbReference type="PANTHER" id="PTHR43763:SF6">
    <property type="entry name" value="XAA-PRO AMINOPEPTIDASE 1"/>
    <property type="match status" value="1"/>
</dbReference>
<dbReference type="Pfam" id="PF01321">
    <property type="entry name" value="Creatinase_N"/>
    <property type="match status" value="1"/>
</dbReference>
<dbReference type="Pfam" id="PF16189">
    <property type="entry name" value="Creatinase_N_2"/>
    <property type="match status" value="1"/>
</dbReference>
<dbReference type="Pfam" id="PF00557">
    <property type="entry name" value="Peptidase_M24"/>
    <property type="match status" value="1"/>
</dbReference>
<dbReference type="Pfam" id="PF16188">
    <property type="entry name" value="Peptidase_M24_C"/>
    <property type="match status" value="1"/>
</dbReference>
<dbReference type="SUPFAM" id="SSF55920">
    <property type="entry name" value="Creatinase/aminopeptidase"/>
    <property type="match status" value="1"/>
</dbReference>
<dbReference type="SUPFAM" id="SSF53092">
    <property type="entry name" value="Creatinase/prolidase N-terminal domain"/>
    <property type="match status" value="1"/>
</dbReference>
<dbReference type="PROSITE" id="PS00491">
    <property type="entry name" value="PROLINE_PEPTIDASE"/>
    <property type="match status" value="1"/>
</dbReference>
<accession>Q2U7S5</accession>
<accession>Q76LL3</accession>
<gene>
    <name type="primary">ampp</name>
    <name type="synonym">app</name>
    <name type="ORF">AO090701000720</name>
</gene>
<reference key="1">
    <citation type="submission" date="2002-01" db="EMBL/GenBank/DDBJ databases">
        <title>Cloning and expression of aminopeptidase-P from Aspergillus oryzae.</title>
        <authorList>
            <person name="Matsushima K."/>
            <person name="Koyama Y."/>
            <person name="Takahashi T."/>
            <person name="Matsuda T."/>
            <person name="Ito K."/>
            <person name="Nakahara T."/>
            <person name="Umitsuki G."/>
        </authorList>
    </citation>
    <scope>NUCLEOTIDE SEQUENCE [MRNA]</scope>
    <source>
        <strain>ATCC 42149 / RIB 40</strain>
    </source>
</reference>
<reference key="2">
    <citation type="journal article" date="2005" name="Nature">
        <title>Genome sequencing and analysis of Aspergillus oryzae.</title>
        <authorList>
            <person name="Machida M."/>
            <person name="Asai K."/>
            <person name="Sano M."/>
            <person name="Tanaka T."/>
            <person name="Kumagai T."/>
            <person name="Terai G."/>
            <person name="Kusumoto K."/>
            <person name="Arima T."/>
            <person name="Akita O."/>
            <person name="Kashiwagi Y."/>
            <person name="Abe K."/>
            <person name="Gomi K."/>
            <person name="Horiuchi H."/>
            <person name="Kitamoto K."/>
            <person name="Kobayashi T."/>
            <person name="Takeuchi M."/>
            <person name="Denning D.W."/>
            <person name="Galagan J.E."/>
            <person name="Nierman W.C."/>
            <person name="Yu J."/>
            <person name="Archer D.B."/>
            <person name="Bennett J.W."/>
            <person name="Bhatnagar D."/>
            <person name="Cleveland T.E."/>
            <person name="Fedorova N.D."/>
            <person name="Gotoh O."/>
            <person name="Horikawa H."/>
            <person name="Hosoyama A."/>
            <person name="Ichinomiya M."/>
            <person name="Igarashi R."/>
            <person name="Iwashita K."/>
            <person name="Juvvadi P.R."/>
            <person name="Kato M."/>
            <person name="Kato Y."/>
            <person name="Kin T."/>
            <person name="Kokubun A."/>
            <person name="Maeda H."/>
            <person name="Maeyama N."/>
            <person name="Maruyama J."/>
            <person name="Nagasaki H."/>
            <person name="Nakajima T."/>
            <person name="Oda K."/>
            <person name="Okada K."/>
            <person name="Paulsen I."/>
            <person name="Sakamoto K."/>
            <person name="Sawano T."/>
            <person name="Takahashi M."/>
            <person name="Takase K."/>
            <person name="Terabayashi Y."/>
            <person name="Wortman J.R."/>
            <person name="Yamada O."/>
            <person name="Yamagata Y."/>
            <person name="Anazawa H."/>
            <person name="Hata Y."/>
            <person name="Koide Y."/>
            <person name="Komori T."/>
            <person name="Koyama Y."/>
            <person name="Minetoki T."/>
            <person name="Suharnan S."/>
            <person name="Tanaka A."/>
            <person name="Isono K."/>
            <person name="Kuhara S."/>
            <person name="Ogasawara N."/>
            <person name="Kikuchi H."/>
        </authorList>
    </citation>
    <scope>NUCLEOTIDE SEQUENCE [LARGE SCALE GENOMIC DNA]</scope>
    <source>
        <strain>ATCC 42149 / RIB 40</strain>
    </source>
</reference>
<organism>
    <name type="scientific">Aspergillus oryzae (strain ATCC 42149 / RIB 40)</name>
    <name type="common">Yellow koji mold</name>
    <dbReference type="NCBI Taxonomy" id="510516"/>
    <lineage>
        <taxon>Eukaryota</taxon>
        <taxon>Fungi</taxon>
        <taxon>Dikarya</taxon>
        <taxon>Ascomycota</taxon>
        <taxon>Pezizomycotina</taxon>
        <taxon>Eurotiomycetes</taxon>
        <taxon>Eurotiomycetidae</taxon>
        <taxon>Eurotiales</taxon>
        <taxon>Aspergillaceae</taxon>
        <taxon>Aspergillus</taxon>
        <taxon>Aspergillus subgen. Circumdati</taxon>
    </lineage>
</organism>
<proteinExistence type="evidence at transcript level"/>
<feature type="chain" id="PRO_0000411783" description="Probable Xaa-Pro aminopeptidase P">
    <location>
        <begin position="1"/>
        <end position="654"/>
    </location>
</feature>
<feature type="binding site" evidence="1">
    <location>
        <position position="449"/>
    </location>
    <ligand>
        <name>Mn(2+)</name>
        <dbReference type="ChEBI" id="CHEBI:29035"/>
        <label>2</label>
    </ligand>
</feature>
<feature type="binding site" evidence="1">
    <location>
        <position position="460"/>
    </location>
    <ligand>
        <name>Mn(2+)</name>
        <dbReference type="ChEBI" id="CHEBI:29035"/>
        <label>1</label>
    </ligand>
</feature>
<feature type="binding site" evidence="1">
    <location>
        <position position="460"/>
    </location>
    <ligand>
        <name>Mn(2+)</name>
        <dbReference type="ChEBI" id="CHEBI:29035"/>
        <label>2</label>
    </ligand>
</feature>
<feature type="binding site" evidence="1">
    <location>
        <position position="558"/>
    </location>
    <ligand>
        <name>Mn(2+)</name>
        <dbReference type="ChEBI" id="CHEBI:29035"/>
        <label>1</label>
    </ligand>
</feature>
<feature type="binding site" evidence="1">
    <location>
        <position position="572"/>
    </location>
    <ligand>
        <name>Mn(2+)</name>
        <dbReference type="ChEBI" id="CHEBI:29035"/>
        <label>1</label>
    </ligand>
</feature>
<feature type="binding site" evidence="1">
    <location>
        <position position="572"/>
    </location>
    <ligand>
        <name>Mn(2+)</name>
        <dbReference type="ChEBI" id="CHEBI:29035"/>
        <label>2</label>
    </ligand>
</feature>
<feature type="sequence conflict" description="In Ref. 1; BAD00702." evidence="2" ref="1">
    <original>Y</original>
    <variation>C</variation>
    <location>
        <position position="640"/>
    </location>
</feature>
<evidence type="ECO:0000250" key="1"/>
<evidence type="ECO:0000305" key="2"/>